<evidence type="ECO:0000255" key="1">
    <source>
        <dbReference type="HAMAP-Rule" id="MF_01057"/>
    </source>
</evidence>
<protein>
    <recommendedName>
        <fullName evidence="1">tRNA (guanine-N(7)-)-methyltransferase</fullName>
        <ecNumber evidence="1">2.1.1.33</ecNumber>
    </recommendedName>
    <alternativeName>
        <fullName evidence="1">tRNA (guanine(46)-N(7))-methyltransferase</fullName>
    </alternativeName>
    <alternativeName>
        <fullName evidence="1">tRNA(m7G46)-methyltransferase</fullName>
    </alternativeName>
</protein>
<proteinExistence type="inferred from homology"/>
<gene>
    <name evidence="1" type="primary">trmB</name>
    <name type="ordered locus">C8J_1222</name>
</gene>
<keyword id="KW-0489">Methyltransferase</keyword>
<keyword id="KW-0949">S-adenosyl-L-methionine</keyword>
<keyword id="KW-0808">Transferase</keyword>
<keyword id="KW-0819">tRNA processing</keyword>
<name>TRMB_CAMJ8</name>
<dbReference type="EC" id="2.1.1.33" evidence="1"/>
<dbReference type="EMBL" id="CP000814">
    <property type="protein sequence ID" value="ABV52821.1"/>
    <property type="molecule type" value="Genomic_DNA"/>
</dbReference>
<dbReference type="RefSeq" id="WP_002856145.1">
    <property type="nucleotide sequence ID" value="NC_009839.1"/>
</dbReference>
<dbReference type="SMR" id="A8FMY4"/>
<dbReference type="KEGG" id="cju:C8J_1222"/>
<dbReference type="HOGENOM" id="CLU_041532_0_0_7"/>
<dbReference type="UniPathway" id="UPA00989"/>
<dbReference type="GO" id="GO:0043527">
    <property type="term" value="C:tRNA methyltransferase complex"/>
    <property type="evidence" value="ECO:0007669"/>
    <property type="project" value="TreeGrafter"/>
</dbReference>
<dbReference type="GO" id="GO:0008176">
    <property type="term" value="F:tRNA (guanine(46)-N7)-methyltransferase activity"/>
    <property type="evidence" value="ECO:0007669"/>
    <property type="project" value="UniProtKB-UniRule"/>
</dbReference>
<dbReference type="Gene3D" id="3.40.50.150">
    <property type="entry name" value="Vaccinia Virus protein VP39"/>
    <property type="match status" value="1"/>
</dbReference>
<dbReference type="HAMAP" id="MF_01057">
    <property type="entry name" value="tRNA_methyltr_TrmB"/>
    <property type="match status" value="1"/>
</dbReference>
<dbReference type="InterPro" id="IPR029063">
    <property type="entry name" value="SAM-dependent_MTases_sf"/>
</dbReference>
<dbReference type="InterPro" id="IPR003358">
    <property type="entry name" value="tRNA_(Gua-N-7)_MeTrfase_Trmb"/>
</dbReference>
<dbReference type="InterPro" id="IPR055361">
    <property type="entry name" value="tRNA_methyltr_TrmB_bact"/>
</dbReference>
<dbReference type="NCBIfam" id="NF010719">
    <property type="entry name" value="PRK14121.1"/>
    <property type="match status" value="1"/>
</dbReference>
<dbReference type="NCBIfam" id="TIGR00091">
    <property type="entry name" value="tRNA (guanosine(46)-N7)-methyltransferase TrmB"/>
    <property type="match status" value="1"/>
</dbReference>
<dbReference type="PANTHER" id="PTHR23417">
    <property type="entry name" value="3-DEOXY-D-MANNO-OCTULOSONIC-ACID TRANSFERASE/TRNA GUANINE-N 7 - -METHYLTRANSFERASE"/>
    <property type="match status" value="1"/>
</dbReference>
<dbReference type="PANTHER" id="PTHR23417:SF14">
    <property type="entry name" value="PENTACOTRIPEPTIDE-REPEAT REGION OF PRORP DOMAIN-CONTAINING PROTEIN"/>
    <property type="match status" value="1"/>
</dbReference>
<dbReference type="Pfam" id="PF02390">
    <property type="entry name" value="Methyltransf_4"/>
    <property type="match status" value="1"/>
</dbReference>
<dbReference type="SUPFAM" id="SSF53335">
    <property type="entry name" value="S-adenosyl-L-methionine-dependent methyltransferases"/>
    <property type="match status" value="1"/>
</dbReference>
<dbReference type="PROSITE" id="PS51625">
    <property type="entry name" value="SAM_MT_TRMB"/>
    <property type="match status" value="1"/>
</dbReference>
<comment type="function">
    <text evidence="1">Catalyzes the formation of N(7)-methylguanine at position 46 (m7G46) in tRNA.</text>
</comment>
<comment type="catalytic activity">
    <reaction evidence="1">
        <text>guanosine(46) in tRNA + S-adenosyl-L-methionine = N(7)-methylguanosine(46) in tRNA + S-adenosyl-L-homocysteine</text>
        <dbReference type="Rhea" id="RHEA:42708"/>
        <dbReference type="Rhea" id="RHEA-COMP:10188"/>
        <dbReference type="Rhea" id="RHEA-COMP:10189"/>
        <dbReference type="ChEBI" id="CHEBI:57856"/>
        <dbReference type="ChEBI" id="CHEBI:59789"/>
        <dbReference type="ChEBI" id="CHEBI:74269"/>
        <dbReference type="ChEBI" id="CHEBI:74480"/>
        <dbReference type="EC" id="2.1.1.33"/>
    </reaction>
</comment>
<comment type="pathway">
    <text evidence="1">tRNA modification; N(7)-methylguanine-tRNA biosynthesis.</text>
</comment>
<comment type="similarity">
    <text evidence="1">Belongs to the class I-like SAM-binding methyltransferase superfamily. TrmB family.</text>
</comment>
<feature type="chain" id="PRO_1000072996" description="tRNA (guanine-N(7)-)-methyltransferase">
    <location>
        <begin position="1"/>
        <end position="392"/>
    </location>
</feature>
<feature type="binding site" evidence="1">
    <location>
        <position position="123"/>
    </location>
    <ligand>
        <name>S-adenosyl-L-methionine</name>
        <dbReference type="ChEBI" id="CHEBI:59789"/>
    </ligand>
</feature>
<feature type="binding site" evidence="1">
    <location>
        <position position="148"/>
    </location>
    <ligand>
        <name>S-adenosyl-L-methionine</name>
        <dbReference type="ChEBI" id="CHEBI:59789"/>
    </ligand>
</feature>
<feature type="binding site" evidence="1">
    <location>
        <position position="175"/>
    </location>
    <ligand>
        <name>S-adenosyl-L-methionine</name>
        <dbReference type="ChEBI" id="CHEBI:59789"/>
    </ligand>
</feature>
<feature type="binding site" evidence="1">
    <location>
        <position position="201"/>
    </location>
    <ligand>
        <name>substrate</name>
    </ligand>
</feature>
<feature type="binding site" evidence="1">
    <location>
        <position position="231"/>
    </location>
    <ligand>
        <name>substrate</name>
    </ligand>
</feature>
<accession>A8FMY4</accession>
<reference key="1">
    <citation type="journal article" date="2007" name="J. Bacteriol.">
        <title>The complete genome sequence of Campylobacter jejuni strain 81116 (NCTC11828).</title>
        <authorList>
            <person name="Pearson B.M."/>
            <person name="Gaskin D.J.H."/>
            <person name="Segers R.P.A.M."/>
            <person name="Wells J.M."/>
            <person name="Nuijten P.J.M."/>
            <person name="van Vliet A.H.M."/>
        </authorList>
    </citation>
    <scope>NUCLEOTIDE SEQUENCE [LARGE SCALE GENOMIC DNA]</scope>
    <source>
        <strain>81116 / NCTC 11828</strain>
    </source>
</reference>
<organism>
    <name type="scientific">Campylobacter jejuni subsp. jejuni serotype O:6 (strain 81116 / NCTC 11828)</name>
    <dbReference type="NCBI Taxonomy" id="407148"/>
    <lineage>
        <taxon>Bacteria</taxon>
        <taxon>Pseudomonadati</taxon>
        <taxon>Campylobacterota</taxon>
        <taxon>Epsilonproteobacteria</taxon>
        <taxon>Campylobacterales</taxon>
        <taxon>Campylobacteraceae</taxon>
        <taxon>Campylobacter</taxon>
    </lineage>
</organism>
<sequence length="392" mass="46215">MPNFKSKKIKEINLPYSKDDVEFLWLAKNDNVSLIYTKVQEESFFLQIKKAQNGFVIKGDKHTKPSKIGYLQKALKIFKEGFCEDIINEAFGLKNNALIEKTPFIVDNFDELLSKLQGKIYIEIGFGSGRHLLYQAKENPNVLILGVEIYNPALTQVAKLAKVQNVNNILLIQSDARLLLSVLKSKSVEKIFLHFPVPWDKKPHRRVIGKDFCKECARVLTQNGRFELRTDSFEYFNFTLEQFLTFPAPKFSLRKNENLEISSKYEDRWKKQEKNIYDLWVWNFNQECKNYELNEFNLSSVEFSKEDLKKIEQNFKNITIKKDDFFLHFESIYKQDENLLLKVAFGAFNKPEHCYLHLDKTIDFVFKEPFKIQENIKAINELKEILKVQFKI</sequence>